<dbReference type="EMBL" id="AF499634">
    <property type="protein sequence ID" value="AAM18966.1"/>
    <property type="molecule type" value="mRNA"/>
</dbReference>
<dbReference type="EMBL" id="AB011474">
    <property type="protein sequence ID" value="BAB10408.1"/>
    <property type="status" value="ALT_SEQ"/>
    <property type="molecule type" value="Genomic_DNA"/>
</dbReference>
<dbReference type="EMBL" id="CP002688">
    <property type="protein sequence ID" value="AED98143.1"/>
    <property type="molecule type" value="Genomic_DNA"/>
</dbReference>
<dbReference type="EMBL" id="CP002688">
    <property type="protein sequence ID" value="AED98144.1"/>
    <property type="molecule type" value="Genomic_DNA"/>
</dbReference>
<dbReference type="EMBL" id="AF424555">
    <property type="protein sequence ID" value="AAL11549.1"/>
    <property type="status" value="ALT_INIT"/>
    <property type="molecule type" value="mRNA"/>
</dbReference>
<dbReference type="EMBL" id="BT002691">
    <property type="protein sequence ID" value="AAO11607.1"/>
    <property type="molecule type" value="mRNA"/>
</dbReference>
<dbReference type="RefSeq" id="NP_569025.2">
    <molecule id="Q8S2T0-2"/>
    <property type="nucleotide sequence ID" value="NM_126000.2"/>
</dbReference>
<dbReference type="RefSeq" id="NP_851277.1">
    <molecule id="Q8S2T0-1"/>
    <property type="nucleotide sequence ID" value="NM_180946.3"/>
</dbReference>
<dbReference type="SMR" id="Q8S2T0"/>
<dbReference type="BioGRID" id="21975">
    <property type="interactions" value="9"/>
</dbReference>
<dbReference type="FunCoup" id="Q8S2T0">
    <property type="interactions" value="1803"/>
</dbReference>
<dbReference type="IntAct" id="Q8S2T0">
    <property type="interactions" value="1"/>
</dbReference>
<dbReference type="STRING" id="3702.Q8S2T0"/>
<dbReference type="GlyGen" id="Q8S2T0">
    <property type="glycosylation" value="1 site"/>
</dbReference>
<dbReference type="iPTMnet" id="Q8S2T0"/>
<dbReference type="MetOSite" id="Q8S2T0"/>
<dbReference type="PaxDb" id="3702-AT5G66030.1"/>
<dbReference type="ProteomicsDB" id="247292">
    <molecule id="Q8S2T0-1"/>
</dbReference>
<dbReference type="EnsemblPlants" id="AT5G66030.1">
    <molecule id="Q8S2T0-1"/>
    <property type="protein sequence ID" value="AT5G66030.1"/>
    <property type="gene ID" value="AT5G66030"/>
</dbReference>
<dbReference type="EnsemblPlants" id="AT5G66030.2">
    <molecule id="Q8S2T0-2"/>
    <property type="protein sequence ID" value="AT5G66030.2"/>
    <property type="gene ID" value="AT5G66030"/>
</dbReference>
<dbReference type="GeneID" id="836733"/>
<dbReference type="Gramene" id="AT5G66030.1">
    <molecule id="Q8S2T0-1"/>
    <property type="protein sequence ID" value="AT5G66030.1"/>
    <property type="gene ID" value="AT5G66030"/>
</dbReference>
<dbReference type="Gramene" id="AT5G66030.2">
    <molecule id="Q8S2T0-2"/>
    <property type="protein sequence ID" value="AT5G66030.2"/>
    <property type="gene ID" value="AT5G66030"/>
</dbReference>
<dbReference type="KEGG" id="ath:AT5G66030"/>
<dbReference type="Araport" id="AT5G66030"/>
<dbReference type="TAIR" id="AT5G66030">
    <property type="gene designation" value="ATGRIP"/>
</dbReference>
<dbReference type="eggNOG" id="ENOG502QTVU">
    <property type="taxonomic scope" value="Eukaryota"/>
</dbReference>
<dbReference type="InParanoid" id="Q8S2T0"/>
<dbReference type="PhylomeDB" id="Q8S2T0"/>
<dbReference type="PRO" id="PR:Q8S2T0"/>
<dbReference type="Proteomes" id="UP000006548">
    <property type="component" value="Chromosome 5"/>
</dbReference>
<dbReference type="ExpressionAtlas" id="Q8S2T0">
    <property type="expression patterns" value="baseline and differential"/>
</dbReference>
<dbReference type="GO" id="GO:0005802">
    <property type="term" value="C:trans-Golgi network"/>
    <property type="evidence" value="ECO:0000314"/>
    <property type="project" value="TAIR"/>
</dbReference>
<dbReference type="GO" id="GO:0048193">
    <property type="term" value="P:Golgi vesicle transport"/>
    <property type="evidence" value="ECO:0000304"/>
    <property type="project" value="TAIR"/>
</dbReference>
<dbReference type="Gene3D" id="1.10.287.1490">
    <property type="match status" value="1"/>
</dbReference>
<dbReference type="InterPro" id="IPR000237">
    <property type="entry name" value="GRIP_dom"/>
</dbReference>
<dbReference type="PANTHER" id="PTHR23160:SF1">
    <property type="entry name" value="PROTEIN GRIP"/>
    <property type="match status" value="1"/>
</dbReference>
<dbReference type="PANTHER" id="PTHR23160">
    <property type="entry name" value="SYNAPTONEMAL COMPLEX PROTEIN-RELATED"/>
    <property type="match status" value="1"/>
</dbReference>
<dbReference type="Pfam" id="PF01465">
    <property type="entry name" value="GRIP"/>
    <property type="match status" value="1"/>
</dbReference>
<dbReference type="SMART" id="SM00755">
    <property type="entry name" value="Grip"/>
    <property type="match status" value="1"/>
</dbReference>
<dbReference type="PROSITE" id="PS50913">
    <property type="entry name" value="GRIP"/>
    <property type="match status" value="1"/>
</dbReference>
<gene>
    <name type="primary">GRIP</name>
    <name type="ordered locus">At5g66030</name>
    <name type="ORF">K2A18.10</name>
</gene>
<name>GRIP_ARATH</name>
<comment type="function">
    <text evidence="1">Golgi matrix protein playing a role in tethering of vesicles to Golgi membranes and in maintaining the overall structure of the Golgi apparatus.</text>
</comment>
<comment type="subunit">
    <text evidence="6 7">Interacts with the GTP-bound ARF3/ARL1, but not with the GDP-bound ARF3/ARL1.</text>
</comment>
<comment type="interaction">
    <interactant intactId="EBI-1537908">
        <id>Q8S2T0</id>
    </interactant>
    <interactant intactId="EBI-1537890">
        <id>P40940</id>
        <label>ARF3</label>
    </interactant>
    <organismsDiffer>false</organismsDiffer>
    <experiments>5</experiments>
</comment>
<comment type="subcellular location">
    <subcellularLocation>
        <location evidence="5 6 7">Golgi apparatus</location>
    </subcellularLocation>
    <text>Locates to the trans-Golgi or to the trans-Golgi network (TGN).</text>
</comment>
<comment type="alternative products">
    <event type="alternative splicing"/>
    <isoform>
        <id>Q8S2T0-1</id>
        <name>1</name>
        <sequence type="displayed"/>
    </isoform>
    <isoform>
        <id>Q8S2T0-2</id>
        <name>2</name>
        <sequence type="described" ref="VSP_035178"/>
    </isoform>
</comment>
<comment type="domain">
    <text>The C-terminal GRIP domain (711-788) is necessary and sufficient for Golgi targeting.</text>
</comment>
<comment type="sequence caution" evidence="8">
    <conflict type="erroneous initiation">
        <sequence resource="EMBL-CDS" id="AAL11549"/>
    </conflict>
</comment>
<comment type="sequence caution" evidence="8">
    <conflict type="erroneous gene model prediction">
        <sequence resource="EMBL-CDS" id="BAB10408"/>
    </conflict>
</comment>
<accession>Q8S2T0</accession>
<accession>Q3E854</accession>
<accession>Q944S6</accession>
<accession>Q9FKX9</accession>
<reference key="1">
    <citation type="journal article" date="2004" name="Planta">
        <title>Identification of a Golgi-localised GRIP domain protein from Arabidopsis thaliana.</title>
        <authorList>
            <person name="Gilson P.R."/>
            <person name="Vergara C.E."/>
            <person name="Kjer-Nielsen L."/>
            <person name="Teasdale R.D."/>
            <person name="Bacic A."/>
            <person name="Gleeson P.A."/>
        </authorList>
    </citation>
    <scope>NUCLEOTIDE SEQUENCE [MRNA] (ISOFORM 1)</scope>
    <scope>SUBCELLULAR LOCATION</scope>
</reference>
<reference key="2">
    <citation type="journal article" date="1998" name="DNA Res.">
        <title>Structural analysis of Arabidopsis thaliana chromosome 5. V. Sequence features of the regions of 1,381,565 bp covered by twenty one physically assigned P1 and TAC clones.</title>
        <authorList>
            <person name="Kaneko T."/>
            <person name="Kotani H."/>
            <person name="Nakamura Y."/>
            <person name="Sato S."/>
            <person name="Asamizu E."/>
            <person name="Miyajima N."/>
            <person name="Tabata S."/>
        </authorList>
    </citation>
    <scope>NUCLEOTIDE SEQUENCE [LARGE SCALE GENOMIC DNA]</scope>
    <source>
        <strain>cv. Columbia</strain>
    </source>
</reference>
<reference key="3">
    <citation type="journal article" date="2017" name="Plant J.">
        <title>Araport11: a complete reannotation of the Arabidopsis thaliana reference genome.</title>
        <authorList>
            <person name="Cheng C.Y."/>
            <person name="Krishnakumar V."/>
            <person name="Chan A.P."/>
            <person name="Thibaud-Nissen F."/>
            <person name="Schobel S."/>
            <person name="Town C.D."/>
        </authorList>
    </citation>
    <scope>GENOME REANNOTATION</scope>
    <source>
        <strain>cv. Columbia</strain>
    </source>
</reference>
<reference key="4">
    <citation type="journal article" date="2003" name="Science">
        <title>Empirical analysis of transcriptional activity in the Arabidopsis genome.</title>
        <authorList>
            <person name="Yamada K."/>
            <person name="Lim J."/>
            <person name="Dale J.M."/>
            <person name="Chen H."/>
            <person name="Shinn P."/>
            <person name="Palm C.J."/>
            <person name="Southwick A.M."/>
            <person name="Wu H.C."/>
            <person name="Kim C.J."/>
            <person name="Nguyen M."/>
            <person name="Pham P.K."/>
            <person name="Cheuk R.F."/>
            <person name="Karlin-Newmann G."/>
            <person name="Liu S.X."/>
            <person name="Lam B."/>
            <person name="Sakano H."/>
            <person name="Wu T."/>
            <person name="Yu G."/>
            <person name="Miranda M."/>
            <person name="Quach H.L."/>
            <person name="Tripp M."/>
            <person name="Chang C.H."/>
            <person name="Lee J.M."/>
            <person name="Toriumi M.J."/>
            <person name="Chan M.M."/>
            <person name="Tang C.C."/>
            <person name="Onodera C.S."/>
            <person name="Deng J.M."/>
            <person name="Akiyama K."/>
            <person name="Ansari Y."/>
            <person name="Arakawa T."/>
            <person name="Banh J."/>
            <person name="Banno F."/>
            <person name="Bowser L."/>
            <person name="Brooks S.Y."/>
            <person name="Carninci P."/>
            <person name="Chao Q."/>
            <person name="Choy N."/>
            <person name="Enju A."/>
            <person name="Goldsmith A.D."/>
            <person name="Gurjal M."/>
            <person name="Hansen N.F."/>
            <person name="Hayashizaki Y."/>
            <person name="Johnson-Hopson C."/>
            <person name="Hsuan V.W."/>
            <person name="Iida K."/>
            <person name="Karnes M."/>
            <person name="Khan S."/>
            <person name="Koesema E."/>
            <person name="Ishida J."/>
            <person name="Jiang P.X."/>
            <person name="Jones T."/>
            <person name="Kawai J."/>
            <person name="Kamiya A."/>
            <person name="Meyers C."/>
            <person name="Nakajima M."/>
            <person name="Narusaka M."/>
            <person name="Seki M."/>
            <person name="Sakurai T."/>
            <person name="Satou M."/>
            <person name="Tamse R."/>
            <person name="Vaysberg M."/>
            <person name="Wallender E.K."/>
            <person name="Wong C."/>
            <person name="Yamamura Y."/>
            <person name="Yuan S."/>
            <person name="Shinozaki K."/>
            <person name="Davis R.W."/>
            <person name="Theologis A."/>
            <person name="Ecker J.R."/>
        </authorList>
    </citation>
    <scope>NUCLEOTIDE SEQUENCE [LARGE SCALE MRNA] OF 119-788 (ISOFORM 1)</scope>
    <source>
        <strain>cv. Columbia</strain>
    </source>
</reference>
<reference key="5">
    <citation type="journal article" date="2005" name="Plant J.">
        <title>An Arabidopsis GRIP domain protein locates to the trans-Golgi and binds the small GTPase ARL1.</title>
        <authorList>
            <person name="Latijnhouwers M."/>
            <person name="Hawes C."/>
            <person name="Carvalho C."/>
            <person name="Oparka K."/>
            <person name="Gillingham A.K."/>
            <person name="Boevink P."/>
        </authorList>
    </citation>
    <scope>SUBCELLULAR LOCATION</scope>
    <scope>MUTAGENESIS OF TYR-717</scope>
    <scope>INTERACTION WITH ARF3/ARL1</scope>
</reference>
<reference key="6">
    <citation type="journal article" date="2006" name="Plant Mol. Biol.">
        <title>ARL1 plays a role in the binding of the GRIP domain of a peripheral matrix protein to the Golgi apparatus in plant cells.</title>
        <authorList>
            <person name="Stefano G."/>
            <person name="Renna L."/>
            <person name="Hanton S.L."/>
            <person name="Chatre L."/>
            <person name="Haas T.A."/>
            <person name="Brandizzi F."/>
        </authorList>
    </citation>
    <scope>SUBCELLULAR LOCATION</scope>
    <scope>MUTAGENESIS OF TYR-717 AND LYS-719</scope>
    <scope>INTERACTION WITH ARF3/ARL1</scope>
</reference>
<evidence type="ECO:0000250" key="1"/>
<evidence type="ECO:0000255" key="2"/>
<evidence type="ECO:0000255" key="3">
    <source>
        <dbReference type="PROSITE-ProRule" id="PRU00250"/>
    </source>
</evidence>
<evidence type="ECO:0000256" key="4">
    <source>
        <dbReference type="SAM" id="MobiDB-lite"/>
    </source>
</evidence>
<evidence type="ECO:0000269" key="5">
    <source>
    </source>
</evidence>
<evidence type="ECO:0000269" key="6">
    <source>
    </source>
</evidence>
<evidence type="ECO:0000269" key="7">
    <source>
    </source>
</evidence>
<evidence type="ECO:0000305" key="8"/>
<feature type="chain" id="PRO_0000348541" description="Protein GRIP">
    <location>
        <begin position="1"/>
        <end position="788"/>
    </location>
</feature>
<feature type="domain" description="GRIP" evidence="3">
    <location>
        <begin position="708"/>
        <end position="755"/>
    </location>
</feature>
<feature type="region of interest" description="Disordered" evidence="4">
    <location>
        <begin position="1"/>
        <end position="30"/>
    </location>
</feature>
<feature type="region of interest" description="Disordered" evidence="4">
    <location>
        <begin position="612"/>
        <end position="643"/>
    </location>
</feature>
<feature type="region of interest" description="Disordered" evidence="4">
    <location>
        <begin position="763"/>
        <end position="788"/>
    </location>
</feature>
<feature type="coiled-coil region" evidence="2">
    <location>
        <begin position="30"/>
        <end position="615"/>
    </location>
</feature>
<feature type="compositionally biased region" description="Acidic residues" evidence="4">
    <location>
        <begin position="1"/>
        <end position="15"/>
    </location>
</feature>
<feature type="compositionally biased region" description="Basic and acidic residues" evidence="4">
    <location>
        <begin position="16"/>
        <end position="26"/>
    </location>
</feature>
<feature type="compositionally biased region" description="Polar residues" evidence="4">
    <location>
        <begin position="620"/>
        <end position="643"/>
    </location>
</feature>
<feature type="compositionally biased region" description="Low complexity" evidence="4">
    <location>
        <begin position="763"/>
        <end position="775"/>
    </location>
</feature>
<feature type="splice variant" id="VSP_035178" description="In isoform 2." evidence="8">
    <original>KCQQAYHSSTTAATTTEATPSPAS</original>
    <variation>N</variation>
    <location>
        <begin position="751"/>
        <end position="774"/>
    </location>
</feature>
<feature type="mutagenesis site" description="Reduced interaction with ARF3/ARL1 and loss of Golgi targeting." evidence="6 7">
    <original>Y</original>
    <variation>A</variation>
    <location>
        <position position="717"/>
    </location>
</feature>
<feature type="mutagenesis site" description="Reduced interaction with ARF3/ARL1 and loss of Golgi targeting." evidence="7">
    <original>K</original>
    <variation>A</variation>
    <location>
        <position position="719"/>
    </location>
</feature>
<feature type="sequence conflict" description="In Ref. 1; AAM18966." evidence="8" ref="1">
    <original>L</original>
    <variation>F</variation>
    <location>
        <position position="179"/>
    </location>
</feature>
<feature type="sequence conflict" description="In Ref. 1; AAM18966." evidence="8" ref="1">
    <original>S</original>
    <variation>A</variation>
    <location>
        <position position="194"/>
    </location>
</feature>
<organism>
    <name type="scientific">Arabidopsis thaliana</name>
    <name type="common">Mouse-ear cress</name>
    <dbReference type="NCBI Taxonomy" id="3702"/>
    <lineage>
        <taxon>Eukaryota</taxon>
        <taxon>Viridiplantae</taxon>
        <taxon>Streptophyta</taxon>
        <taxon>Embryophyta</taxon>
        <taxon>Tracheophyta</taxon>
        <taxon>Spermatophyta</taxon>
        <taxon>Magnoliopsida</taxon>
        <taxon>eudicotyledons</taxon>
        <taxon>Gunneridae</taxon>
        <taxon>Pentapetalae</taxon>
        <taxon>rosids</taxon>
        <taxon>malvids</taxon>
        <taxon>Brassicales</taxon>
        <taxon>Brassicaceae</taxon>
        <taxon>Camelineae</taxon>
        <taxon>Arabidopsis</taxon>
    </lineage>
</organism>
<keyword id="KW-0025">Alternative splicing</keyword>
<keyword id="KW-0175">Coiled coil</keyword>
<keyword id="KW-0333">Golgi apparatus</keyword>
<keyword id="KW-1185">Reference proteome</keyword>
<protein>
    <recommendedName>
        <fullName>Protein GRIP</fullName>
        <shortName>AtGRIP</shortName>
    </recommendedName>
</protein>
<sequence>MSEDKESDVVGEEEESHVIKEDKELNDASNETLTENGDQLLQMIAELRLENDFLRSQFEGLKDEVAQGRSLQKAEQVEADSAQLKQLQEQVASLSREIDVEKQTRVAAEQALEHLREAYSEADAKSQEYSSKFSQVEQKLDQEIKERDEKYADLDAKFTRLHKRAKQRIQEIQKEKDDLDARFREVNETAERASSQHSSMQQELERTRQQANEALKAMDAERQQLRSANNKLRDTIEELRGSLQPKENKIETLQQSLLDKDQILEDLKKQLQAVEERKQIAVTELSAKHQKNLEGLEAQVVDALSERDKAAETISSLQVLLAEKESKIAEMEAAATGEAARLRAAAETLKGELAHLKSENEKEKETWEASCDALKSKLEIAESNYLQAEIEVAKMRSQLGSEMSMQTQILSTKDAELKGAREEINRLQSEFSSYKIRAHALLQKKDMELAAAKDSEQIKSLEEALKEAEKEVYLVSAERDRAQQDLQSALASLEKELEERAGALKDASEQIKSLEVKLDSTVARNQAEKQAWEEDLRVLEETWRRRCEALTAQNEASPAEGIEKELENAKLRNKRMKEEHESVRELADRLIEEKDREISRLVDEMTNLRKSMESKPVWNKSPSQVHHYGNNNTESQQQDVSNLSTSAAEHQILILARQQAQREEELAQTQRHILALQEEIEELERENRLHSQQEAVLKTELREMERKQKREGVDMTYLKNVILKLLETGEVEALLPVVGMLLQFSPEEIQKCQQAYHSSTTAATTTEATPSPASEGSGLSVFSRFSFS</sequence>
<proteinExistence type="evidence at protein level"/>